<feature type="chain" id="PRO_1000100797" description="Probable nicotinate-nucleotide adenylyltransferase">
    <location>
        <begin position="1"/>
        <end position="202"/>
    </location>
</feature>
<organism>
    <name type="scientific">Synechococcus sp. (strain JA-2-3B'a(2-13))</name>
    <name type="common">Cyanobacteria bacterium Yellowstone B-Prime</name>
    <dbReference type="NCBI Taxonomy" id="321332"/>
    <lineage>
        <taxon>Bacteria</taxon>
        <taxon>Bacillati</taxon>
        <taxon>Cyanobacteriota</taxon>
        <taxon>Cyanophyceae</taxon>
        <taxon>Synechococcales</taxon>
        <taxon>Synechococcaceae</taxon>
        <taxon>Synechococcus</taxon>
    </lineage>
</organism>
<dbReference type="EC" id="2.7.7.18" evidence="1"/>
<dbReference type="EMBL" id="CP000240">
    <property type="protein sequence ID" value="ABD01538.1"/>
    <property type="molecule type" value="Genomic_DNA"/>
</dbReference>
<dbReference type="RefSeq" id="WP_011432197.1">
    <property type="nucleotide sequence ID" value="NC_007776.1"/>
</dbReference>
<dbReference type="SMR" id="Q2JNW7"/>
<dbReference type="STRING" id="321332.CYB_0547"/>
<dbReference type="KEGG" id="cyb:CYB_0547"/>
<dbReference type="eggNOG" id="COG1057">
    <property type="taxonomic scope" value="Bacteria"/>
</dbReference>
<dbReference type="HOGENOM" id="CLU_069765_3_1_3"/>
<dbReference type="OrthoDB" id="5295945at2"/>
<dbReference type="UniPathway" id="UPA00253">
    <property type="reaction ID" value="UER00332"/>
</dbReference>
<dbReference type="Proteomes" id="UP000001938">
    <property type="component" value="Chromosome"/>
</dbReference>
<dbReference type="GO" id="GO:0005524">
    <property type="term" value="F:ATP binding"/>
    <property type="evidence" value="ECO:0007669"/>
    <property type="project" value="UniProtKB-KW"/>
</dbReference>
<dbReference type="GO" id="GO:0004515">
    <property type="term" value="F:nicotinate-nucleotide adenylyltransferase activity"/>
    <property type="evidence" value="ECO:0007669"/>
    <property type="project" value="UniProtKB-UniRule"/>
</dbReference>
<dbReference type="GO" id="GO:0009435">
    <property type="term" value="P:NAD biosynthetic process"/>
    <property type="evidence" value="ECO:0007669"/>
    <property type="project" value="UniProtKB-UniRule"/>
</dbReference>
<dbReference type="CDD" id="cd02165">
    <property type="entry name" value="NMNAT"/>
    <property type="match status" value="1"/>
</dbReference>
<dbReference type="Gene3D" id="3.40.50.620">
    <property type="entry name" value="HUPs"/>
    <property type="match status" value="1"/>
</dbReference>
<dbReference type="HAMAP" id="MF_00244">
    <property type="entry name" value="NaMN_adenylyltr"/>
    <property type="match status" value="1"/>
</dbReference>
<dbReference type="InterPro" id="IPR004821">
    <property type="entry name" value="Cyt_trans-like"/>
</dbReference>
<dbReference type="InterPro" id="IPR005248">
    <property type="entry name" value="NadD/NMNAT"/>
</dbReference>
<dbReference type="InterPro" id="IPR014729">
    <property type="entry name" value="Rossmann-like_a/b/a_fold"/>
</dbReference>
<dbReference type="NCBIfam" id="TIGR00125">
    <property type="entry name" value="cyt_tran_rel"/>
    <property type="match status" value="1"/>
</dbReference>
<dbReference type="NCBIfam" id="TIGR00482">
    <property type="entry name" value="nicotinate (nicotinamide) nucleotide adenylyltransferase"/>
    <property type="match status" value="1"/>
</dbReference>
<dbReference type="NCBIfam" id="NF000840">
    <property type="entry name" value="PRK00071.1-3"/>
    <property type="match status" value="1"/>
</dbReference>
<dbReference type="PANTHER" id="PTHR39321">
    <property type="entry name" value="NICOTINATE-NUCLEOTIDE ADENYLYLTRANSFERASE-RELATED"/>
    <property type="match status" value="1"/>
</dbReference>
<dbReference type="PANTHER" id="PTHR39321:SF3">
    <property type="entry name" value="PHOSPHOPANTETHEINE ADENYLYLTRANSFERASE"/>
    <property type="match status" value="1"/>
</dbReference>
<dbReference type="Pfam" id="PF01467">
    <property type="entry name" value="CTP_transf_like"/>
    <property type="match status" value="1"/>
</dbReference>
<dbReference type="SUPFAM" id="SSF52374">
    <property type="entry name" value="Nucleotidylyl transferase"/>
    <property type="match status" value="1"/>
</dbReference>
<sequence>MKHRRIAILGGTFNPVHHGHLIMAEQALWQFDLDQVLWMPAGDPPHKPLAPGASKADRLAMVKLAIADHERFACSELEIRRSGRSYTIETLRTLIQEQPNTQWYWIIGVDALRDLPQWYQAEELARLCHWIVAPRVDAGDAAQVLQAVAAKLPIQAQILEAPTLTLSSTYLRQQIQKGGSIRYLVPPAVEHYIRQHRLYLQP</sequence>
<proteinExistence type="inferred from homology"/>
<accession>Q2JNW7</accession>
<keyword id="KW-0067">ATP-binding</keyword>
<keyword id="KW-0520">NAD</keyword>
<keyword id="KW-0547">Nucleotide-binding</keyword>
<keyword id="KW-0548">Nucleotidyltransferase</keyword>
<keyword id="KW-0662">Pyridine nucleotide biosynthesis</keyword>
<keyword id="KW-1185">Reference proteome</keyword>
<keyword id="KW-0808">Transferase</keyword>
<gene>
    <name evidence="1" type="primary">nadD</name>
    <name type="ordered locus">CYB_0547</name>
</gene>
<protein>
    <recommendedName>
        <fullName evidence="1">Probable nicotinate-nucleotide adenylyltransferase</fullName>
        <ecNumber evidence="1">2.7.7.18</ecNumber>
    </recommendedName>
    <alternativeName>
        <fullName evidence="1">Deamido-NAD(+) diphosphorylase</fullName>
    </alternativeName>
    <alternativeName>
        <fullName evidence="1">Deamido-NAD(+) pyrophosphorylase</fullName>
    </alternativeName>
    <alternativeName>
        <fullName evidence="1">Nicotinate mononucleotide adenylyltransferase</fullName>
        <shortName evidence="1">NaMN adenylyltransferase</shortName>
    </alternativeName>
</protein>
<evidence type="ECO:0000255" key="1">
    <source>
        <dbReference type="HAMAP-Rule" id="MF_00244"/>
    </source>
</evidence>
<name>NADD_SYNJB</name>
<reference key="1">
    <citation type="journal article" date="2007" name="ISME J.">
        <title>Population level functional diversity in a microbial community revealed by comparative genomic and metagenomic analyses.</title>
        <authorList>
            <person name="Bhaya D."/>
            <person name="Grossman A.R."/>
            <person name="Steunou A.-S."/>
            <person name="Khuri N."/>
            <person name="Cohan F.M."/>
            <person name="Hamamura N."/>
            <person name="Melendrez M.C."/>
            <person name="Bateson M.M."/>
            <person name="Ward D.M."/>
            <person name="Heidelberg J.F."/>
        </authorList>
    </citation>
    <scope>NUCLEOTIDE SEQUENCE [LARGE SCALE GENOMIC DNA]</scope>
    <source>
        <strain>JA-2-3B'a(2-13)</strain>
    </source>
</reference>
<comment type="function">
    <text evidence="1">Catalyzes the reversible adenylation of nicotinate mononucleotide (NaMN) to nicotinic acid adenine dinucleotide (NaAD).</text>
</comment>
<comment type="catalytic activity">
    <reaction evidence="1">
        <text>nicotinate beta-D-ribonucleotide + ATP + H(+) = deamido-NAD(+) + diphosphate</text>
        <dbReference type="Rhea" id="RHEA:22860"/>
        <dbReference type="ChEBI" id="CHEBI:15378"/>
        <dbReference type="ChEBI" id="CHEBI:30616"/>
        <dbReference type="ChEBI" id="CHEBI:33019"/>
        <dbReference type="ChEBI" id="CHEBI:57502"/>
        <dbReference type="ChEBI" id="CHEBI:58437"/>
        <dbReference type="EC" id="2.7.7.18"/>
    </reaction>
</comment>
<comment type="pathway">
    <text evidence="1">Cofactor biosynthesis; NAD(+) biosynthesis; deamido-NAD(+) from nicotinate D-ribonucleotide: step 1/1.</text>
</comment>
<comment type="similarity">
    <text evidence="1">Belongs to the NadD family.</text>
</comment>